<reference key="1">
    <citation type="journal article" date="2005" name="Rapid Commun. Mass Spectrom.">
        <title>Fast analysis of low molecular mass compounds present in snake venom: identification of ten new pyroglutamate-containing peptides.</title>
        <authorList>
            <person name="Wermelinger L.S."/>
            <person name="Dutra D.L."/>
            <person name="Oliveira-Carvalho A.L."/>
            <person name="Soares M.R."/>
            <person name="Bloch C. Jr."/>
            <person name="Zingali R.B."/>
        </authorList>
    </citation>
    <scope>PROTEIN SEQUENCE</scope>
    <scope>SUBCELLULAR LOCATION</scope>
    <scope>TISSUE SPECIFICITY</scope>
    <scope>MASS SPECTROMETRY</scope>
    <scope>PYROGLUTAMATE FORMATION AT GLN-1</scope>
    <source>
        <tissue>Venom</tissue>
    </source>
</reference>
<reference key="2">
    <citation type="journal article" date="2002" name="Biochemistry">
        <title>Selective inhibition of the C-domain of angiotensin I converting enzyme by bradykinin potentiating peptides.</title>
        <authorList>
            <person name="Cotton J."/>
            <person name="Hayashi M.A."/>
            <person name="Cuniasse P."/>
            <person name="Vazeux G."/>
            <person name="Ianzer D."/>
            <person name="De Camargo A.C."/>
            <person name="Dive V."/>
        </authorList>
    </citation>
    <scope>SYNTHESIS</scope>
    <scope>FUNCTION</scope>
</reference>
<evidence type="ECO:0000269" key="1">
    <source>
    </source>
</evidence>
<evidence type="ECO:0000269" key="2">
    <source>
    </source>
</evidence>
<evidence type="ECO:0000305" key="3"/>
<accession>P0C7S4</accession>
<organism>
    <name type="scientific">Bothrops neuwiedi</name>
    <name type="common">Neuwied's lancehead</name>
    <dbReference type="NCBI Taxonomy" id="95648"/>
    <lineage>
        <taxon>Eukaryota</taxon>
        <taxon>Metazoa</taxon>
        <taxon>Chordata</taxon>
        <taxon>Craniata</taxon>
        <taxon>Vertebrata</taxon>
        <taxon>Euteleostomi</taxon>
        <taxon>Lepidosauria</taxon>
        <taxon>Squamata</taxon>
        <taxon>Bifurcata</taxon>
        <taxon>Unidentata</taxon>
        <taxon>Episquamata</taxon>
        <taxon>Toxicofera</taxon>
        <taxon>Serpentes</taxon>
        <taxon>Colubroidea</taxon>
        <taxon>Viperidae</taxon>
        <taxon>Crotalinae</taxon>
        <taxon>Bothrops</taxon>
    </lineage>
</organism>
<protein>
    <recommendedName>
        <fullName>Bradykinin-potentiating peptide 9a</fullName>
        <shortName>BPP-9</shortName>
        <shortName>BPP-9a</shortName>
        <shortName>BPP-a</shortName>
    </recommendedName>
</protein>
<sequence length="9" mass="1118">QWPRPQIPP</sequence>
<comment type="function">
    <text evidence="1">This peptide inhibits the activity of the angiotensin-converting enzyme (ACE) by a preferential interaction with its C-domain. May also potentiate the hypotensive effects of bradykinin.</text>
</comment>
<comment type="subcellular location">
    <subcellularLocation>
        <location evidence="2">Secreted</location>
    </subcellularLocation>
</comment>
<comment type="tissue specificity">
    <text evidence="2">Expressed by the venom gland.</text>
</comment>
<comment type="mass spectrometry" mass="1101.72" method="MALDI" evidence="2"/>
<comment type="similarity">
    <text evidence="3">Belongs to the bradykinin-potentiating peptide family.</text>
</comment>
<name>BPP9A_BOTNU</name>
<feature type="peptide" id="PRO_0000343188" description="Bradykinin-potentiating peptide 9a">
    <location>
        <begin position="1"/>
        <end position="9"/>
    </location>
</feature>
<feature type="modified residue" description="Pyrrolidone carboxylic acid" evidence="2">
    <location>
        <position position="1"/>
    </location>
</feature>
<proteinExistence type="evidence at protein level"/>
<dbReference type="GO" id="GO:0005576">
    <property type="term" value="C:extracellular region"/>
    <property type="evidence" value="ECO:0007669"/>
    <property type="project" value="UniProtKB-SubCell"/>
</dbReference>
<dbReference type="GO" id="GO:0030414">
    <property type="term" value="F:peptidase inhibitor activity"/>
    <property type="evidence" value="ECO:0007669"/>
    <property type="project" value="UniProtKB-KW"/>
</dbReference>
<dbReference type="GO" id="GO:0090729">
    <property type="term" value="F:toxin activity"/>
    <property type="evidence" value="ECO:0007669"/>
    <property type="project" value="UniProtKB-KW"/>
</dbReference>
<dbReference type="GO" id="GO:0008217">
    <property type="term" value="P:regulation of blood pressure"/>
    <property type="evidence" value="ECO:0007669"/>
    <property type="project" value="UniProtKB-KW"/>
</dbReference>
<keyword id="KW-0903">Direct protein sequencing</keyword>
<keyword id="KW-0382">Hypotensive agent</keyword>
<keyword id="KW-0481">Metalloenzyme inhibitor</keyword>
<keyword id="KW-0483">Metalloprotease inhibitor</keyword>
<keyword id="KW-0646">Protease inhibitor</keyword>
<keyword id="KW-0873">Pyrrolidone carboxylic acid</keyword>
<keyword id="KW-0964">Secreted</keyword>
<keyword id="KW-0800">Toxin</keyword>